<proteinExistence type="inferred from homology"/>
<sequence length="268" mass="29613">MYKDIKVDPAQLEAALDARLKIRAGFDKPTAGMAAGMTQVNMISVPRDWAYDFLLYAHRNPQSCPVLDVLEEGIYATKLAADSDIRTDFPRYRIWKDGEMVDEVTDAREIYNAHPDLVTFLIGCSFSFETALQEAGIEVRHIHDDTNVPMYLSNIKCEPAGRISGNMVVSMRPIPSHQISEAVKITARMPSVHGAPVHIGHPESLGIKDVNKPDFGDASRIEAGEIPVFWACGVTPQAAVMNSKIPFAISHAPGYMFITDIPDRAWMG</sequence>
<comment type="similarity">
    <text evidence="1">Belongs to the D-glutamate cyclase family.</text>
</comment>
<accession>B7H4L8</accession>
<protein>
    <recommendedName>
        <fullName evidence="1">Putative hydro-lyase ABBFA_002264</fullName>
        <ecNumber evidence="1">4.2.1.-</ecNumber>
    </recommendedName>
</protein>
<gene>
    <name type="ordered locus">ABBFA_002264</name>
</gene>
<evidence type="ECO:0000255" key="1">
    <source>
        <dbReference type="HAMAP-Rule" id="MF_01830"/>
    </source>
</evidence>
<reference key="1">
    <citation type="journal article" date="2008" name="J. Bacteriol.">
        <title>Comparative genome sequence analysis of multidrug-resistant Acinetobacter baumannii.</title>
        <authorList>
            <person name="Adams M.D."/>
            <person name="Goglin K."/>
            <person name="Molyneaux N."/>
            <person name="Hujer K.M."/>
            <person name="Lavender H."/>
            <person name="Jamison J.J."/>
            <person name="MacDonald I.J."/>
            <person name="Martin K.M."/>
            <person name="Russo T."/>
            <person name="Campagnari A.A."/>
            <person name="Hujer A.M."/>
            <person name="Bonomo R.A."/>
            <person name="Gill S.R."/>
        </authorList>
    </citation>
    <scope>NUCLEOTIDE SEQUENCE [LARGE SCALE GENOMIC DNA]</scope>
    <source>
        <strain>AB307-0294</strain>
    </source>
</reference>
<name>Y2264_ACIB3</name>
<dbReference type="EC" id="4.2.1.-" evidence="1"/>
<dbReference type="EMBL" id="CP001172">
    <property type="protein sequence ID" value="ACJ58157.1"/>
    <property type="molecule type" value="Genomic_DNA"/>
</dbReference>
<dbReference type="RefSeq" id="WP_000276200.1">
    <property type="nucleotide sequence ID" value="NZ_CP001172.1"/>
</dbReference>
<dbReference type="SMR" id="B7H4L8"/>
<dbReference type="HOGENOM" id="CLU_059759_0_0_6"/>
<dbReference type="Proteomes" id="UP000006924">
    <property type="component" value="Chromosome"/>
</dbReference>
<dbReference type="GO" id="GO:0016829">
    <property type="term" value="F:lyase activity"/>
    <property type="evidence" value="ECO:0007669"/>
    <property type="project" value="UniProtKB-KW"/>
</dbReference>
<dbReference type="FunFam" id="3.30.2040.10:FF:000001">
    <property type="entry name" value="D-glutamate cyclase, mitochondrial"/>
    <property type="match status" value="1"/>
</dbReference>
<dbReference type="Gene3D" id="3.40.1640.10">
    <property type="entry name" value="PSTPO5379-like"/>
    <property type="match status" value="1"/>
</dbReference>
<dbReference type="Gene3D" id="3.30.2040.10">
    <property type="entry name" value="PSTPO5379-like domain"/>
    <property type="match status" value="1"/>
</dbReference>
<dbReference type="HAMAP" id="MF_01830">
    <property type="entry name" value="Hydro_lyase"/>
    <property type="match status" value="1"/>
</dbReference>
<dbReference type="InterPro" id="IPR009906">
    <property type="entry name" value="D-Glu_cyclase"/>
</dbReference>
<dbReference type="InterPro" id="IPR038021">
    <property type="entry name" value="Putative_hydro-lyase"/>
</dbReference>
<dbReference type="InterPro" id="IPR016938">
    <property type="entry name" value="UPF0317"/>
</dbReference>
<dbReference type="NCBIfam" id="NF003969">
    <property type="entry name" value="PRK05463.1"/>
    <property type="match status" value="1"/>
</dbReference>
<dbReference type="PANTHER" id="PTHR32022">
    <property type="entry name" value="D-GLUTAMATE CYCLASE, MITOCHONDRIAL"/>
    <property type="match status" value="1"/>
</dbReference>
<dbReference type="PANTHER" id="PTHR32022:SF10">
    <property type="entry name" value="D-GLUTAMATE CYCLASE, MITOCHONDRIAL"/>
    <property type="match status" value="1"/>
</dbReference>
<dbReference type="Pfam" id="PF07286">
    <property type="entry name" value="D-Glu_cyclase"/>
    <property type="match status" value="1"/>
</dbReference>
<dbReference type="PIRSF" id="PIRSF029755">
    <property type="entry name" value="UCP029755"/>
    <property type="match status" value="1"/>
</dbReference>
<dbReference type="SUPFAM" id="SSF160920">
    <property type="entry name" value="PSTPO5379-like"/>
    <property type="match status" value="1"/>
</dbReference>
<keyword id="KW-0456">Lyase</keyword>
<organism>
    <name type="scientific">Acinetobacter baumannii (strain AB307-0294)</name>
    <dbReference type="NCBI Taxonomy" id="557600"/>
    <lineage>
        <taxon>Bacteria</taxon>
        <taxon>Pseudomonadati</taxon>
        <taxon>Pseudomonadota</taxon>
        <taxon>Gammaproteobacteria</taxon>
        <taxon>Moraxellales</taxon>
        <taxon>Moraxellaceae</taxon>
        <taxon>Acinetobacter</taxon>
        <taxon>Acinetobacter calcoaceticus/baumannii complex</taxon>
    </lineage>
</organism>
<feature type="chain" id="PRO_0000379807" description="Putative hydro-lyase ABBFA_002264">
    <location>
        <begin position="1"/>
        <end position="268"/>
    </location>
</feature>